<gene>
    <name type="ordered locus">azo3165</name>
</gene>
<comment type="subcellular location">
    <subcellularLocation>
        <location evidence="1">Cell inner membrane</location>
        <topology evidence="1">Multi-pass membrane protein</topology>
    </subcellularLocation>
</comment>
<comment type="similarity">
    <text evidence="1">Belongs to the UPF0761 family.</text>
</comment>
<accession>A1KAC6</accession>
<sequence>MHLHPTRDFLRLLGERFSATRCPQVAGSLAFTTLLALVPLLTVAIGVFGNLPGMDKLGASLKDFLLENLLPDRAGRIITTYALQFSQKAARLTLIGTAMLAVTALMLLATIERVFNQIWGVRHRRPLLMRITVSWFMLTLGPVILGGSVVATGYLVSTSAEWSDRLPWIGEIAAATLPPLLLGALFSFLYYAVPNHPVRLLHALAGGLCAALVFLLMQRGLGLFIAGFPTYTLIYGTFAALPIFLLWLYLSWTVILLGALITATLPAFLERQRMLPAFPGDRAWAAVEMLAALAEAQYDGRPVGFAALRRRTNLAEHAAEALLESLRECGIASRTEGGDWVLTRAASDIRLSAVLQRFALDLTAWSALSPGRGGRIVAERLREGLQAADLSLAELAAANTSAGAVQVG</sequence>
<keyword id="KW-0997">Cell inner membrane</keyword>
<keyword id="KW-1003">Cell membrane</keyword>
<keyword id="KW-0472">Membrane</keyword>
<keyword id="KW-1185">Reference proteome</keyword>
<keyword id="KW-0812">Transmembrane</keyword>
<keyword id="KW-1133">Transmembrane helix</keyword>
<name>Y3165_AZOSB</name>
<dbReference type="EMBL" id="AM406670">
    <property type="protein sequence ID" value="CAL95782.1"/>
    <property type="molecule type" value="Genomic_DNA"/>
</dbReference>
<dbReference type="RefSeq" id="WP_011766890.1">
    <property type="nucleotide sequence ID" value="NC_008702.1"/>
</dbReference>
<dbReference type="SMR" id="A1KAC6"/>
<dbReference type="STRING" id="62928.azo3165"/>
<dbReference type="KEGG" id="aoa:dqs_3297"/>
<dbReference type="KEGG" id="azo:azo3165"/>
<dbReference type="eggNOG" id="COG1295">
    <property type="taxonomic scope" value="Bacteria"/>
</dbReference>
<dbReference type="HOGENOM" id="CLU_032288_1_0_4"/>
<dbReference type="OrthoDB" id="9808671at2"/>
<dbReference type="Proteomes" id="UP000002588">
    <property type="component" value="Chromosome"/>
</dbReference>
<dbReference type="GO" id="GO:0005886">
    <property type="term" value="C:plasma membrane"/>
    <property type="evidence" value="ECO:0007669"/>
    <property type="project" value="UniProtKB-SubCell"/>
</dbReference>
<dbReference type="Gene3D" id="1.10.10.10">
    <property type="entry name" value="Winged helix-like DNA-binding domain superfamily/Winged helix DNA-binding domain"/>
    <property type="match status" value="1"/>
</dbReference>
<dbReference type="HAMAP" id="MF_00672">
    <property type="entry name" value="UPF0761"/>
    <property type="match status" value="1"/>
</dbReference>
<dbReference type="InterPro" id="IPR023679">
    <property type="entry name" value="UPF0761_bac"/>
</dbReference>
<dbReference type="InterPro" id="IPR017039">
    <property type="entry name" value="Virul_fac_BrkB"/>
</dbReference>
<dbReference type="InterPro" id="IPR036388">
    <property type="entry name" value="WH-like_DNA-bd_sf"/>
</dbReference>
<dbReference type="NCBIfam" id="TIGR00765">
    <property type="entry name" value="yihY_not_rbn"/>
    <property type="match status" value="1"/>
</dbReference>
<dbReference type="PANTHER" id="PTHR30213">
    <property type="entry name" value="INNER MEMBRANE PROTEIN YHJD"/>
    <property type="match status" value="1"/>
</dbReference>
<dbReference type="PANTHER" id="PTHR30213:SF0">
    <property type="entry name" value="UPF0761 MEMBRANE PROTEIN YIHY"/>
    <property type="match status" value="1"/>
</dbReference>
<dbReference type="Pfam" id="PF03631">
    <property type="entry name" value="Virul_fac_BrkB"/>
    <property type="match status" value="1"/>
</dbReference>
<protein>
    <recommendedName>
        <fullName evidence="1">UPF0761 membrane protein azo3165</fullName>
    </recommendedName>
</protein>
<feature type="chain" id="PRO_0000391020" description="UPF0761 membrane protein azo3165">
    <location>
        <begin position="1"/>
        <end position="408"/>
    </location>
</feature>
<feature type="transmembrane region" description="Helical" evidence="1">
    <location>
        <begin position="29"/>
        <end position="49"/>
    </location>
</feature>
<feature type="transmembrane region" description="Helical" evidence="1">
    <location>
        <begin position="92"/>
        <end position="112"/>
    </location>
</feature>
<feature type="transmembrane region" description="Helical" evidence="1">
    <location>
        <begin position="131"/>
        <end position="151"/>
    </location>
</feature>
<feature type="transmembrane region" description="Helical" evidence="1">
    <location>
        <begin position="172"/>
        <end position="192"/>
    </location>
</feature>
<feature type="transmembrane region" description="Helical" evidence="1">
    <location>
        <begin position="197"/>
        <end position="217"/>
    </location>
</feature>
<feature type="transmembrane region" description="Helical" evidence="1">
    <location>
        <begin position="220"/>
        <end position="240"/>
    </location>
</feature>
<feature type="transmembrane region" description="Helical" evidence="1">
    <location>
        <begin position="241"/>
        <end position="261"/>
    </location>
</feature>
<evidence type="ECO:0000255" key="1">
    <source>
        <dbReference type="HAMAP-Rule" id="MF_00672"/>
    </source>
</evidence>
<reference key="1">
    <citation type="journal article" date="2006" name="Nat. Biotechnol.">
        <title>Complete genome of the mutualistic, N2-fixing grass endophyte Azoarcus sp. strain BH72.</title>
        <authorList>
            <person name="Krause A."/>
            <person name="Ramakumar A."/>
            <person name="Bartels D."/>
            <person name="Battistoni F."/>
            <person name="Bekel T."/>
            <person name="Boch J."/>
            <person name="Boehm M."/>
            <person name="Friedrich F."/>
            <person name="Hurek T."/>
            <person name="Krause L."/>
            <person name="Linke B."/>
            <person name="McHardy A.C."/>
            <person name="Sarkar A."/>
            <person name="Schneiker S."/>
            <person name="Syed A.A."/>
            <person name="Thauer R."/>
            <person name="Vorhoelter F.-J."/>
            <person name="Weidner S."/>
            <person name="Puehler A."/>
            <person name="Reinhold-Hurek B."/>
            <person name="Kaiser O."/>
            <person name="Goesmann A."/>
        </authorList>
    </citation>
    <scope>NUCLEOTIDE SEQUENCE [LARGE SCALE GENOMIC DNA]</scope>
    <source>
        <strain>BH72</strain>
    </source>
</reference>
<proteinExistence type="inferred from homology"/>
<organism>
    <name type="scientific">Azoarcus sp. (strain BH72)</name>
    <dbReference type="NCBI Taxonomy" id="418699"/>
    <lineage>
        <taxon>Bacteria</taxon>
        <taxon>Pseudomonadati</taxon>
        <taxon>Pseudomonadota</taxon>
        <taxon>Betaproteobacteria</taxon>
        <taxon>Rhodocyclales</taxon>
        <taxon>Zoogloeaceae</taxon>
        <taxon>Azoarcus</taxon>
    </lineage>
</organism>